<accession>Q2SKZ1</accession>
<comment type="function">
    <text evidence="1">Catalyzes 2 different reactions between oxygen and the acireductone 1,2-dihydroxy-3-keto-5-methylthiopentene (DHK-MTPene) depending upon the metal bound in the active site. Fe-containing acireductone dioxygenase (Fe-ARD) produces formate and 2-keto-4-methylthiobutyrate (KMTB), the alpha-ketoacid precursor of methionine in the methionine recycle pathway. Ni-containing acireductone dioxygenase (Ni-ARD) produces methylthiopropionate, carbon monoxide and formate, and does not lie on the methionine recycle pathway.</text>
</comment>
<comment type="catalytic activity">
    <reaction evidence="1">
        <text>1,2-dihydroxy-5-(methylsulfanyl)pent-1-en-3-one + O2 = 3-(methylsulfanyl)propanoate + CO + formate + 2 H(+)</text>
        <dbReference type="Rhea" id="RHEA:14161"/>
        <dbReference type="ChEBI" id="CHEBI:15378"/>
        <dbReference type="ChEBI" id="CHEBI:15379"/>
        <dbReference type="ChEBI" id="CHEBI:15740"/>
        <dbReference type="ChEBI" id="CHEBI:17245"/>
        <dbReference type="ChEBI" id="CHEBI:49016"/>
        <dbReference type="ChEBI" id="CHEBI:49252"/>
        <dbReference type="EC" id="1.13.11.53"/>
    </reaction>
</comment>
<comment type="catalytic activity">
    <reaction evidence="1">
        <text>1,2-dihydroxy-5-(methylsulfanyl)pent-1-en-3-one + O2 = 4-methylsulfanyl-2-oxobutanoate + formate + 2 H(+)</text>
        <dbReference type="Rhea" id="RHEA:24504"/>
        <dbReference type="ChEBI" id="CHEBI:15378"/>
        <dbReference type="ChEBI" id="CHEBI:15379"/>
        <dbReference type="ChEBI" id="CHEBI:15740"/>
        <dbReference type="ChEBI" id="CHEBI:16723"/>
        <dbReference type="ChEBI" id="CHEBI:49252"/>
        <dbReference type="EC" id="1.13.11.54"/>
    </reaction>
</comment>
<comment type="cofactor">
    <cofactor evidence="1">
        <name>Fe(2+)</name>
        <dbReference type="ChEBI" id="CHEBI:29033"/>
    </cofactor>
    <text evidence="1">Binds 1 Fe(2+) cation per monomer.</text>
</comment>
<comment type="cofactor">
    <cofactor evidence="1">
        <name>Ni(2+)</name>
        <dbReference type="ChEBI" id="CHEBI:49786"/>
    </cofactor>
    <text evidence="1">Binds 1 nickel ion per monomer.</text>
</comment>
<comment type="pathway">
    <text evidence="1">Amino-acid biosynthesis; L-methionine biosynthesis via salvage pathway; L-methionine from S-methyl-5-thio-alpha-D-ribose 1-phosphate: step 5/6.</text>
</comment>
<comment type="subunit">
    <text evidence="1">Monomer.</text>
</comment>
<comment type="similarity">
    <text evidence="1">Belongs to the acireductone dioxygenase (ARD) family.</text>
</comment>
<sequence length="185" mass="21363">MSSLRIYNDNDFSQPLVFTEDGAEISRQLNEAGIRFERWSTRELDEGATPDSILAAYQEEVEKLKAENGFTTADVVSLTPAHPQKDEFRKKFLDEHRHSEDEVRFFVRGQGLFYLHLEDKVYVVLCRKNDLISVPNGTKHWFDMGPEPEFTCVRLFTNPEGWVAQFTGDEIASKAPRFEQLIEEA</sequence>
<protein>
    <recommendedName>
        <fullName evidence="1">Acireductone dioxygenase</fullName>
    </recommendedName>
    <alternativeName>
        <fullName evidence="1">1,2-dihydroxy-3-keto-5-methylthiopentene dioxygenase</fullName>
        <shortName evidence="1">DHK-MTPene dioxygenase</shortName>
    </alternativeName>
    <alternativeName>
        <fullName evidence="1">Acireductone dioxygenase (Fe(2+)-requiring)</fullName>
        <shortName evidence="1">ARD'</shortName>
        <shortName evidence="1">Fe-ARD</shortName>
        <ecNumber evidence="1">1.13.11.54</ecNumber>
    </alternativeName>
    <alternativeName>
        <fullName evidence="1">Acireductone dioxygenase (Ni(2+)-requiring)</fullName>
        <shortName evidence="1">ARD</shortName>
        <shortName evidence="1">Ni-ARD</shortName>
        <ecNumber evidence="1">1.13.11.53</ecNumber>
    </alternativeName>
</protein>
<proteinExistence type="inferred from homology"/>
<keyword id="KW-0028">Amino-acid biosynthesis</keyword>
<keyword id="KW-0223">Dioxygenase</keyword>
<keyword id="KW-0408">Iron</keyword>
<keyword id="KW-0479">Metal-binding</keyword>
<keyword id="KW-0486">Methionine biosynthesis</keyword>
<keyword id="KW-0533">Nickel</keyword>
<keyword id="KW-0560">Oxidoreductase</keyword>
<keyword id="KW-1185">Reference proteome</keyword>
<organism>
    <name type="scientific">Hahella chejuensis (strain KCTC 2396)</name>
    <dbReference type="NCBI Taxonomy" id="349521"/>
    <lineage>
        <taxon>Bacteria</taxon>
        <taxon>Pseudomonadati</taxon>
        <taxon>Pseudomonadota</taxon>
        <taxon>Gammaproteobacteria</taxon>
        <taxon>Oceanospirillales</taxon>
        <taxon>Hahellaceae</taxon>
        <taxon>Hahella</taxon>
    </lineage>
</organism>
<reference key="1">
    <citation type="journal article" date="2005" name="Nucleic Acids Res.">
        <title>Genomic blueprint of Hahella chejuensis, a marine microbe producing an algicidal agent.</title>
        <authorList>
            <person name="Jeong H."/>
            <person name="Yim J.H."/>
            <person name="Lee C."/>
            <person name="Choi S.-H."/>
            <person name="Park Y.K."/>
            <person name="Yoon S.H."/>
            <person name="Hur C.-G."/>
            <person name="Kang H.-Y."/>
            <person name="Kim D."/>
            <person name="Lee H.H."/>
            <person name="Park K.H."/>
            <person name="Park S.-H."/>
            <person name="Park H.-S."/>
            <person name="Lee H.K."/>
            <person name="Oh T.K."/>
            <person name="Kim J.F."/>
        </authorList>
    </citation>
    <scope>NUCLEOTIDE SEQUENCE [LARGE SCALE GENOMIC DNA]</scope>
    <source>
        <strain>KCTC 2396</strain>
    </source>
</reference>
<feature type="chain" id="PRO_0000359198" description="Acireductone dioxygenase">
    <location>
        <begin position="1"/>
        <end position="185"/>
    </location>
</feature>
<feature type="binding site" evidence="1">
    <location>
        <position position="96"/>
    </location>
    <ligand>
        <name>Fe(2+)</name>
        <dbReference type="ChEBI" id="CHEBI:29033"/>
    </ligand>
</feature>
<feature type="binding site" evidence="1">
    <location>
        <position position="96"/>
    </location>
    <ligand>
        <name>Ni(2+)</name>
        <dbReference type="ChEBI" id="CHEBI:49786"/>
    </ligand>
</feature>
<feature type="binding site" evidence="1">
    <location>
        <position position="98"/>
    </location>
    <ligand>
        <name>Fe(2+)</name>
        <dbReference type="ChEBI" id="CHEBI:29033"/>
    </ligand>
</feature>
<feature type="binding site" evidence="1">
    <location>
        <position position="98"/>
    </location>
    <ligand>
        <name>Ni(2+)</name>
        <dbReference type="ChEBI" id="CHEBI:49786"/>
    </ligand>
</feature>
<feature type="binding site" evidence="1">
    <location>
        <position position="102"/>
    </location>
    <ligand>
        <name>Fe(2+)</name>
        <dbReference type="ChEBI" id="CHEBI:29033"/>
    </ligand>
</feature>
<feature type="binding site" evidence="1">
    <location>
        <position position="102"/>
    </location>
    <ligand>
        <name>Ni(2+)</name>
        <dbReference type="ChEBI" id="CHEBI:49786"/>
    </ligand>
</feature>
<feature type="binding site" evidence="1">
    <location>
        <position position="140"/>
    </location>
    <ligand>
        <name>Fe(2+)</name>
        <dbReference type="ChEBI" id="CHEBI:29033"/>
    </ligand>
</feature>
<feature type="binding site" evidence="1">
    <location>
        <position position="140"/>
    </location>
    <ligand>
        <name>Ni(2+)</name>
        <dbReference type="ChEBI" id="CHEBI:49786"/>
    </ligand>
</feature>
<feature type="site" description="May play a role in metal incorporation in vivo" evidence="1">
    <location>
        <position position="95"/>
    </location>
</feature>
<feature type="site" description="May play a role in transmitting local conformational changes" evidence="1">
    <location>
        <position position="101"/>
    </location>
</feature>
<feature type="site" description="Important to generate the dianion" evidence="1">
    <location>
        <position position="104"/>
    </location>
</feature>
<gene>
    <name evidence="1" type="primary">mtnD</name>
    <name type="ordered locus">HCH_01845</name>
</gene>
<evidence type="ECO:0000255" key="1">
    <source>
        <dbReference type="HAMAP-Rule" id="MF_01682"/>
    </source>
</evidence>
<dbReference type="EC" id="1.13.11.54" evidence="1"/>
<dbReference type="EC" id="1.13.11.53" evidence="1"/>
<dbReference type="EMBL" id="CP000155">
    <property type="protein sequence ID" value="ABC28683.1"/>
    <property type="molecule type" value="Genomic_DNA"/>
</dbReference>
<dbReference type="RefSeq" id="WP_011395755.1">
    <property type="nucleotide sequence ID" value="NC_007645.1"/>
</dbReference>
<dbReference type="SMR" id="Q2SKZ1"/>
<dbReference type="STRING" id="349521.HCH_01845"/>
<dbReference type="KEGG" id="hch:HCH_01845"/>
<dbReference type="eggNOG" id="COG1791">
    <property type="taxonomic scope" value="Bacteria"/>
</dbReference>
<dbReference type="HOGENOM" id="CLU_125400_0_0_6"/>
<dbReference type="OrthoDB" id="9795636at2"/>
<dbReference type="UniPathway" id="UPA00904">
    <property type="reaction ID" value="UER00878"/>
</dbReference>
<dbReference type="Proteomes" id="UP000000238">
    <property type="component" value="Chromosome"/>
</dbReference>
<dbReference type="GO" id="GO:0010308">
    <property type="term" value="F:acireductone dioxygenase (Ni2+-requiring) activity"/>
    <property type="evidence" value="ECO:0007669"/>
    <property type="project" value="UniProtKB-UniRule"/>
</dbReference>
<dbReference type="GO" id="GO:0010309">
    <property type="term" value="F:acireductone dioxygenase [iron(II)-requiring] activity"/>
    <property type="evidence" value="ECO:0007669"/>
    <property type="project" value="UniProtKB-UniRule"/>
</dbReference>
<dbReference type="GO" id="GO:0005506">
    <property type="term" value="F:iron ion binding"/>
    <property type="evidence" value="ECO:0007669"/>
    <property type="project" value="UniProtKB-UniRule"/>
</dbReference>
<dbReference type="GO" id="GO:0016151">
    <property type="term" value="F:nickel cation binding"/>
    <property type="evidence" value="ECO:0007669"/>
    <property type="project" value="UniProtKB-UniRule"/>
</dbReference>
<dbReference type="GO" id="GO:0019509">
    <property type="term" value="P:L-methionine salvage from methylthioadenosine"/>
    <property type="evidence" value="ECO:0007669"/>
    <property type="project" value="UniProtKB-UniRule"/>
</dbReference>
<dbReference type="GO" id="GO:0019284">
    <property type="term" value="P:L-methionine salvage from S-adenosylmethionine"/>
    <property type="evidence" value="ECO:0007669"/>
    <property type="project" value="InterPro"/>
</dbReference>
<dbReference type="CDD" id="cd02232">
    <property type="entry name" value="cupin_ARD"/>
    <property type="match status" value="1"/>
</dbReference>
<dbReference type="Gene3D" id="2.60.120.10">
    <property type="entry name" value="Jelly Rolls"/>
    <property type="match status" value="1"/>
</dbReference>
<dbReference type="HAMAP" id="MF_01682">
    <property type="entry name" value="Salvage_MtnD"/>
    <property type="match status" value="1"/>
</dbReference>
<dbReference type="InterPro" id="IPR004313">
    <property type="entry name" value="ARD"/>
</dbReference>
<dbReference type="InterPro" id="IPR023956">
    <property type="entry name" value="ARD_bac"/>
</dbReference>
<dbReference type="InterPro" id="IPR014710">
    <property type="entry name" value="RmlC-like_jellyroll"/>
</dbReference>
<dbReference type="InterPro" id="IPR011051">
    <property type="entry name" value="RmlC_Cupin_sf"/>
</dbReference>
<dbReference type="PANTHER" id="PTHR23418">
    <property type="entry name" value="ACIREDUCTONE DIOXYGENASE"/>
    <property type="match status" value="1"/>
</dbReference>
<dbReference type="PANTHER" id="PTHR23418:SF0">
    <property type="entry name" value="ACIREDUCTONE DIOXYGENASE"/>
    <property type="match status" value="1"/>
</dbReference>
<dbReference type="Pfam" id="PF03079">
    <property type="entry name" value="ARD"/>
    <property type="match status" value="1"/>
</dbReference>
<dbReference type="SUPFAM" id="SSF51182">
    <property type="entry name" value="RmlC-like cupins"/>
    <property type="match status" value="1"/>
</dbReference>
<name>MTND_HAHCH</name>